<sequence length="1119" mass="128775">MGRVEDMGLNAKLMKLETELFDYQYNMGLLLIEKKEWTSKFEELQQVYTETKDALKQEQEAHLIAISDAEKREENLTKALGVEKQCVLDLEKALRDMRSDYAEIKFTSDSKLAEASALITKVEEKSLEVESKLHSADAKLAELSRKGSDIERKSHELEARESALRRERLALNAEREALTDNISRQREDLREWERKLQEDEERLAEVRRLLNQREERANENDRLYQQKQSELDGEQKKIEIIMVSLKNKEDDISSRIAKLNIKEKEADAVKHSLEVKEKDLTEFEQKLNAREQSEIQKLLDEHKAILEVKKQSFEMEMDKRKNDFENDLQNRAVEVEKKEVEVKHLEAKLAKREHALDQKHEKLKEKEQYLASKLQDLNEREKSMKLEENKIEDERNQLLSDKQEMLCLKAEIEKDRASTEEQRLKLSEEIERLKITEEERLELARLQSELKQEIENCRHQRELLLKEEDELKQEKMRFEKEWEDLDERRTALMKDLKDITVQKENFEKLKHSEEDRLNNKKLDTESYVQKELDALRLTKDSFAATMEHEKAVLAERTSSEKKQMLNDFELWKRELETKLFNEREDMENALRLREKQFDEEREKELNNINYIKEVISKEREDIKLERSRIAKEKQEILMHQKHLDEQHVVMQKDIGQLVSLSEKLKDQREQFFKERECFIRFVESQKSCKNCGEMTSEFVVSDLQSLAELENLKALSVPQLAENYLRQDLQGTPDKNLSTVTPGAVGLGSPASGGTKSWLQKCTSKIFIFSASKKNNSPDQNTSRRLHVEASPNKLLNTEVIPELPSGVAGETLEMQNMQVSNSNREMESNLNLSGTEQSNIDSKALDVEDSQQSDVRAGNRKPGKRAKGRVRRKRSAKEVAEEAKTVLADPIELNENEHSNGLASAYTNESRGDSSLVGKRTRNSRKRNPSQPSQSAAGDVGADSEGHSDSVTAGGRQKRRRKVVPAVQAPTGRYNLRRHKTAAPLVANGALSDPNKGKEKEIDDGGGIGEEIPDEVDGNTHLVQVTTLKKRINVVNEFSSAGFHGINATSESQDRDAANQLVSDTMLSEEVNGTPEQSRGYQNQGDTSGAEGEDEDGDEVEHPGEVSMRKKVWKFLTT</sequence>
<name>NMCP1_DAUCS</name>
<comment type="function">
    <text evidence="1">Architectural component of nuclear structure that plays different roles in controlling nuclear size and morphology.</text>
</comment>
<comment type="subcellular location">
    <subcellularLocation>
        <location evidence="4">Nucleus matrix</location>
    </subcellularLocation>
    <subcellularLocation>
        <location evidence="4">Nucleus lamina</location>
    </subcellularLocation>
    <text evidence="4">Localizes at the nuclear periphery.</text>
</comment>
<comment type="similarity">
    <text evidence="6">Belongs to the CRWN family.</text>
</comment>
<comment type="sequence caution" evidence="6">
    <conflict type="erroneous gene model prediction">
        <sequence resource="EMBL-CDS" id="KZN02220"/>
    </conflict>
</comment>
<feature type="chain" id="PRO_0000452401" description="Nuclear matrix constituent protein 1">
    <location>
        <begin position="1"/>
        <end position="1119"/>
    </location>
</feature>
<feature type="region of interest" description="Disordered" evidence="3">
    <location>
        <begin position="846"/>
        <end position="884"/>
    </location>
</feature>
<feature type="region of interest" description="Disordered" evidence="3">
    <location>
        <begin position="903"/>
        <end position="974"/>
    </location>
</feature>
<feature type="region of interest" description="Disordered" evidence="3">
    <location>
        <begin position="989"/>
        <end position="1015"/>
    </location>
</feature>
<feature type="region of interest" description="Disordered" evidence="3">
    <location>
        <begin position="1046"/>
        <end position="1109"/>
    </location>
</feature>
<feature type="coiled-coil region" evidence="2">
    <location>
        <begin position="140"/>
        <end position="226"/>
    </location>
</feature>
<feature type="coiled-coil region" evidence="2">
    <location>
        <begin position="328"/>
        <end position="488"/>
    </location>
</feature>
<feature type="compositionally biased region" description="Basic residues" evidence="3">
    <location>
        <begin position="859"/>
        <end position="876"/>
    </location>
</feature>
<feature type="compositionally biased region" description="Basic residues" evidence="3">
    <location>
        <begin position="920"/>
        <end position="929"/>
    </location>
</feature>
<feature type="compositionally biased region" description="Polar residues" evidence="3">
    <location>
        <begin position="1075"/>
        <end position="1085"/>
    </location>
</feature>
<keyword id="KW-0175">Coiled coil</keyword>
<keyword id="KW-0903">Direct protein sequencing</keyword>
<keyword id="KW-0539">Nucleus</keyword>
<organism>
    <name type="scientific">Daucus carota subsp. sativus</name>
    <name type="common">Carrot</name>
    <dbReference type="NCBI Taxonomy" id="79200"/>
    <lineage>
        <taxon>Eukaryota</taxon>
        <taxon>Viridiplantae</taxon>
        <taxon>Streptophyta</taxon>
        <taxon>Embryophyta</taxon>
        <taxon>Tracheophyta</taxon>
        <taxon>Spermatophyta</taxon>
        <taxon>Magnoliopsida</taxon>
        <taxon>eudicotyledons</taxon>
        <taxon>Gunneridae</taxon>
        <taxon>Pentapetalae</taxon>
        <taxon>asterids</taxon>
        <taxon>campanulids</taxon>
        <taxon>Apiales</taxon>
        <taxon>Apiaceae</taxon>
        <taxon>Apioideae</taxon>
        <taxon>Scandiceae</taxon>
        <taxon>Daucinae</taxon>
        <taxon>Daucus</taxon>
        <taxon>Daucus sect. Daucus</taxon>
    </lineage>
</organism>
<proteinExistence type="evidence at protein level"/>
<accession>A0A166B1A6</accession>
<accession>O04390</accession>
<gene>
    <name evidence="5" type="primary">NMCP1</name>
    <name evidence="7" type="ORF">DCAR_010974</name>
</gene>
<reference key="1">
    <citation type="journal article" date="1997" name="Exp. Cell Res.">
        <title>Peripheral framework of carrot cell nucleus contains a novel protein predicted to exhibit a long alpha-helical domain.</title>
        <authorList>
            <person name="Masuda K."/>
            <person name="Xu Z.-J."/>
            <person name="Takahashi S."/>
            <person name="Ito A."/>
            <person name="Ono M."/>
            <person name="Nomura K."/>
            <person name="Inoue M."/>
        </authorList>
    </citation>
    <scope>NUCLEOTIDE SEQUENCE [MRNA]</scope>
    <scope>PROTEIN SEQUENCE OF 61-98 AND 162-190</scope>
    <scope>SUBCELLULAR LOCATION</scope>
</reference>
<reference key="2">
    <citation type="journal article" date="2016" name="Nat. Genet.">
        <title>A high-quality carrot genome assembly provides new insights into carotenoid accumulation and asterid genome evolution.</title>
        <authorList>
            <person name="Iorizzo M."/>
            <person name="Ellison S."/>
            <person name="Senalik D."/>
            <person name="Zeng P."/>
            <person name="Satapoomin P."/>
            <person name="Huang J."/>
            <person name="Bowman M."/>
            <person name="Iovene M."/>
            <person name="Sanseverino W."/>
            <person name="Cavagnaro P."/>
            <person name="Yildiz M."/>
            <person name="Macko-Podgorni A."/>
            <person name="Moranska E."/>
            <person name="Grzebelus E."/>
            <person name="Grzebelus D."/>
            <person name="Ashrafi H."/>
            <person name="Zheng Z."/>
            <person name="Cheng S."/>
            <person name="Spooner D."/>
            <person name="Van Deynze A."/>
            <person name="Simon P."/>
        </authorList>
    </citation>
    <scope>NUCLEOTIDE SEQUENCE [LARGE SCALE GENOMIC DNA]</scope>
    <source>
        <strain>cv. DH1</strain>
    </source>
</reference>
<protein>
    <recommendedName>
        <fullName evidence="5">Nuclear matrix constituent protein 1</fullName>
    </recommendedName>
</protein>
<dbReference type="EMBL" id="D64087">
    <property type="protein sequence ID" value="BAA20407.1"/>
    <property type="molecule type" value="mRNA"/>
</dbReference>
<dbReference type="EMBL" id="LNRQ01000003">
    <property type="protein sequence ID" value="KZN02220.1"/>
    <property type="status" value="ALT_SEQ"/>
    <property type="molecule type" value="Genomic_DNA"/>
</dbReference>
<dbReference type="PIR" id="T14321">
    <property type="entry name" value="T14321"/>
</dbReference>
<dbReference type="SMR" id="A0A166B1A6"/>
<dbReference type="STRING" id="79200.A0A166B1A6"/>
<dbReference type="GO" id="GO:0005652">
    <property type="term" value="C:nuclear lamina"/>
    <property type="evidence" value="ECO:0000314"/>
    <property type="project" value="UniProtKB"/>
</dbReference>
<dbReference type="GO" id="GO:0016363">
    <property type="term" value="C:nuclear matrix"/>
    <property type="evidence" value="ECO:0000314"/>
    <property type="project" value="UniProtKB"/>
</dbReference>
<dbReference type="GO" id="GO:0006997">
    <property type="term" value="P:nucleus organization"/>
    <property type="evidence" value="ECO:0007669"/>
    <property type="project" value="InterPro"/>
</dbReference>
<dbReference type="InterPro" id="IPR040418">
    <property type="entry name" value="CRWN"/>
</dbReference>
<dbReference type="PANTHER" id="PTHR31908:SF11">
    <property type="entry name" value="PROTEIN CROWDED NUCLEI 1"/>
    <property type="match status" value="1"/>
</dbReference>
<dbReference type="PANTHER" id="PTHR31908">
    <property type="entry name" value="PROTEIN CROWDED NUCLEI 4"/>
    <property type="match status" value="1"/>
</dbReference>
<evidence type="ECO:0000250" key="1">
    <source>
        <dbReference type="UniProtKB" id="Q0JJ05"/>
    </source>
</evidence>
<evidence type="ECO:0000255" key="2"/>
<evidence type="ECO:0000256" key="3">
    <source>
        <dbReference type="SAM" id="MobiDB-lite"/>
    </source>
</evidence>
<evidence type="ECO:0000269" key="4">
    <source>
    </source>
</evidence>
<evidence type="ECO:0000303" key="5">
    <source>
    </source>
</evidence>
<evidence type="ECO:0000305" key="6"/>
<evidence type="ECO:0000312" key="7">
    <source>
        <dbReference type="EMBL" id="KZN02220.1"/>
    </source>
</evidence>